<keyword id="KW-0025">Alternative splicing</keyword>
<keyword id="KW-0325">Glycoprotein</keyword>
<keyword id="KW-0472">Membrane</keyword>
<keyword id="KW-1267">Proteomics identification</keyword>
<keyword id="KW-1185">Reference proteome</keyword>
<keyword id="KW-0812">Transmembrane</keyword>
<keyword id="KW-1133">Transmembrane helix</keyword>
<gene>
    <name type="primary">SLC44A3</name>
    <name type="synonym">CTL3</name>
    <name type="ORF">UNQ558/PRO1115</name>
</gene>
<sequence length="653" mass="73783">MHCLGAEYLVSAEGAPRQREWRPQIYRKCTDTAWLFLFFLFWTGLVFIMGYSVVAGAAGRLLFGYDSFGNMCGKKNSPVEGAPLSGQDMTLKKHVFFMNSCNLEVKGTQLNRMALCVSNCPEEQLDSLEEVQFFANTSGSFLCVYSLNSFNYTHSPKADSLCPRLPVPPSKSFPLFNRCVPQTPECYSLFASVLINDVDTLHRILSGIMSGRDTILGLCILALALSLAMMFTFRFITTLLVHIFISLVILGLLFVCGVLWWLYYDYTNDLSIELDTERENMKCVLGFAIVSTGITAVLLVLIFVLRKRIKLTVELFQITNKAISSAPFLLFQPLWTFAILIFFWVLWVAVLLSLGTAGAAQVMEGGQVEYKPLSGIRYMWSYHLIGLIWTSEFILACQQMTIAGAVVTCYFNRSKNDPPDHPILSSLSILFFYHQGTVVKGSFLISVVRIPRIIVMYMQNALKEQQHGALSRYLFRCCYCCFWCLDKYLLHLNQNAYTTTAINGTDFCTSAKDAFKILSKNSSHFTSINCFGDFIIFLGKVLVVCFTVFGGLMAFNYNRAFQVWAVPLLLVAFFAYLVAHSFLSVFETVLDALFLCFAVDLETNDGSSEKPYFMDQEFLSFVKRSNKLNNARAQQDKHSLRNEEGTELQAIVR</sequence>
<protein>
    <recommendedName>
        <fullName>Choline transporter-like protein 3</fullName>
    </recommendedName>
    <alternativeName>
        <fullName>Solute carrier family 44 member 3</fullName>
    </alternativeName>
</protein>
<name>CTL3_HUMAN</name>
<organism>
    <name type="scientific">Homo sapiens</name>
    <name type="common">Human</name>
    <dbReference type="NCBI Taxonomy" id="9606"/>
    <lineage>
        <taxon>Eukaryota</taxon>
        <taxon>Metazoa</taxon>
        <taxon>Chordata</taxon>
        <taxon>Craniata</taxon>
        <taxon>Vertebrata</taxon>
        <taxon>Euteleostomi</taxon>
        <taxon>Mammalia</taxon>
        <taxon>Eutheria</taxon>
        <taxon>Euarchontoglires</taxon>
        <taxon>Primates</taxon>
        <taxon>Haplorrhini</taxon>
        <taxon>Catarrhini</taxon>
        <taxon>Hominidae</taxon>
        <taxon>Homo</taxon>
    </lineage>
</organism>
<dbReference type="EMBL" id="AK303906">
    <property type="protein sequence ID" value="BAG64836.1"/>
    <property type="molecule type" value="mRNA"/>
</dbReference>
<dbReference type="EMBL" id="AK301288">
    <property type="protein sequence ID" value="BAG62846.1"/>
    <property type="molecule type" value="mRNA"/>
</dbReference>
<dbReference type="EMBL" id="AK316123">
    <property type="protein sequence ID" value="BAH14494.1"/>
    <property type="molecule type" value="mRNA"/>
</dbReference>
<dbReference type="EMBL" id="AC093429">
    <property type="status" value="NOT_ANNOTATED_CDS"/>
    <property type="molecule type" value="Genomic_DNA"/>
</dbReference>
<dbReference type="EMBL" id="AL359554">
    <property type="protein sequence ID" value="CAC36091.1"/>
    <property type="molecule type" value="Genomic_DNA"/>
</dbReference>
<dbReference type="EMBL" id="BC033858">
    <property type="protein sequence ID" value="AAH33858.2"/>
    <property type="status" value="ALT_INIT"/>
    <property type="molecule type" value="mRNA"/>
</dbReference>
<dbReference type="EMBL" id="BC053877">
    <property type="protein sequence ID" value="AAH53877.1"/>
    <property type="molecule type" value="mRNA"/>
</dbReference>
<dbReference type="EMBL" id="AY358659">
    <property type="protein sequence ID" value="AAQ89022.1"/>
    <property type="status" value="ALT_INIT"/>
    <property type="molecule type" value="mRNA"/>
</dbReference>
<dbReference type="CCDS" id="CCDS44176.1">
    <molecule id="Q8N4M1-1"/>
</dbReference>
<dbReference type="CCDS" id="CCDS58011.1">
    <molecule id="Q8N4M1-6"/>
</dbReference>
<dbReference type="CCDS" id="CCDS58012.1">
    <molecule id="Q8N4M1-4"/>
</dbReference>
<dbReference type="CCDS" id="CCDS58013.1">
    <molecule id="Q8N4M1-3"/>
</dbReference>
<dbReference type="CCDS" id="CCDS751.1">
    <molecule id="Q8N4M1-2"/>
</dbReference>
<dbReference type="RefSeq" id="NP_001107578.1">
    <molecule id="Q8N4M1-1"/>
    <property type="nucleotide sequence ID" value="NM_001114106.3"/>
</dbReference>
<dbReference type="RefSeq" id="NP_001245269.1">
    <property type="nucleotide sequence ID" value="NM_001258340.1"/>
</dbReference>
<dbReference type="RefSeq" id="NP_001245270.1">
    <molecule id="Q8N4M1-6"/>
    <property type="nucleotide sequence ID" value="NM_001258341.2"/>
</dbReference>
<dbReference type="RefSeq" id="NP_001245271.1">
    <molecule id="Q8N4M1-3"/>
    <property type="nucleotide sequence ID" value="NM_001258342.2"/>
</dbReference>
<dbReference type="RefSeq" id="NP_001245272.1">
    <molecule id="Q8N4M1-4"/>
    <property type="nucleotide sequence ID" value="NM_001258343.2"/>
</dbReference>
<dbReference type="RefSeq" id="NP_001288008.1">
    <property type="nucleotide sequence ID" value="NM_001301079.1"/>
</dbReference>
<dbReference type="RefSeq" id="NP_689582.2">
    <molecule id="Q8N4M1-2"/>
    <property type="nucleotide sequence ID" value="NM_152369.5"/>
</dbReference>
<dbReference type="RefSeq" id="XP_005270498.1">
    <molecule id="Q8N4M1-2"/>
    <property type="nucleotide sequence ID" value="XM_005270441.3"/>
</dbReference>
<dbReference type="BioGRID" id="126026">
    <property type="interactions" value="50"/>
</dbReference>
<dbReference type="FunCoup" id="Q8N4M1">
    <property type="interactions" value="395"/>
</dbReference>
<dbReference type="IntAct" id="Q8N4M1">
    <property type="interactions" value="4"/>
</dbReference>
<dbReference type="STRING" id="9606.ENSP00000271227"/>
<dbReference type="DrugBank" id="DB00122">
    <property type="generic name" value="Choline"/>
</dbReference>
<dbReference type="DrugBank" id="DB14006">
    <property type="generic name" value="Choline salicylate"/>
</dbReference>
<dbReference type="TCDB" id="2.A.92.1.3">
    <property type="family name" value="the choline transporter-like (ctl) family"/>
</dbReference>
<dbReference type="GlyCosmos" id="Q8N4M1">
    <property type="glycosylation" value="5 sites, No reported glycans"/>
</dbReference>
<dbReference type="GlyGen" id="Q8N4M1">
    <property type="glycosylation" value="5 sites"/>
</dbReference>
<dbReference type="iPTMnet" id="Q8N4M1"/>
<dbReference type="PhosphoSitePlus" id="Q8N4M1"/>
<dbReference type="BioMuta" id="SLC44A3"/>
<dbReference type="DMDM" id="259016387"/>
<dbReference type="jPOST" id="Q8N4M1"/>
<dbReference type="MassIVE" id="Q8N4M1"/>
<dbReference type="PaxDb" id="9606-ENSP00000271227"/>
<dbReference type="PeptideAtlas" id="Q8N4M1"/>
<dbReference type="ProteomicsDB" id="21138"/>
<dbReference type="ProteomicsDB" id="21290"/>
<dbReference type="ProteomicsDB" id="71943">
    <molecule id="Q8N4M1-1"/>
</dbReference>
<dbReference type="ProteomicsDB" id="71944">
    <molecule id="Q8N4M1-2"/>
</dbReference>
<dbReference type="ProteomicsDB" id="71945">
    <molecule id="Q8N4M1-3"/>
</dbReference>
<dbReference type="Antibodypedia" id="33668">
    <property type="antibodies" value="56 antibodies from 15 providers"/>
</dbReference>
<dbReference type="DNASU" id="126969"/>
<dbReference type="Ensembl" id="ENST00000271227.11">
    <molecule id="Q8N4M1-1"/>
    <property type="protein sequence ID" value="ENSP00000271227.6"/>
    <property type="gene ID" value="ENSG00000143036.17"/>
</dbReference>
<dbReference type="Ensembl" id="ENST00000446120.6">
    <molecule id="Q8N4M1-3"/>
    <property type="protein sequence ID" value="ENSP00000389143.2"/>
    <property type="gene ID" value="ENSG00000143036.17"/>
</dbReference>
<dbReference type="Ensembl" id="ENST00000467909.5">
    <molecule id="Q8N4M1-2"/>
    <property type="protein sequence ID" value="ENSP00000432789.1"/>
    <property type="gene ID" value="ENSG00000143036.17"/>
</dbReference>
<dbReference type="Ensembl" id="ENST00000527077.5">
    <molecule id="Q8N4M1-4"/>
    <property type="protein sequence ID" value="ENSP00000433641.1"/>
    <property type="gene ID" value="ENSG00000143036.17"/>
</dbReference>
<dbReference type="Ensembl" id="ENST00000529450.5">
    <molecule id="Q8N4M1-6"/>
    <property type="protein sequence ID" value="ENSP00000431836.1"/>
    <property type="gene ID" value="ENSG00000143036.17"/>
</dbReference>
<dbReference type="GeneID" id="126969"/>
<dbReference type="KEGG" id="hsa:126969"/>
<dbReference type="MANE-Select" id="ENST00000271227.11">
    <property type="protein sequence ID" value="ENSP00000271227.6"/>
    <property type="RefSeq nucleotide sequence ID" value="NM_001114106.3"/>
    <property type="RefSeq protein sequence ID" value="NP_001107578.1"/>
</dbReference>
<dbReference type="UCSC" id="uc001dqv.6">
    <molecule id="Q8N4M1-1"/>
    <property type="organism name" value="human"/>
</dbReference>
<dbReference type="AGR" id="HGNC:28689"/>
<dbReference type="CTD" id="126969"/>
<dbReference type="GeneCards" id="SLC44A3"/>
<dbReference type="HGNC" id="HGNC:28689">
    <property type="gene designation" value="SLC44A3"/>
</dbReference>
<dbReference type="HPA" id="ENSG00000143036">
    <property type="expression patterns" value="Low tissue specificity"/>
</dbReference>
<dbReference type="MIM" id="620328">
    <property type="type" value="gene"/>
</dbReference>
<dbReference type="neXtProt" id="NX_Q8N4M1"/>
<dbReference type="OpenTargets" id="ENSG00000143036"/>
<dbReference type="PharmGKB" id="PA142670900"/>
<dbReference type="VEuPathDB" id="HostDB:ENSG00000143036"/>
<dbReference type="eggNOG" id="KOG1362">
    <property type="taxonomic scope" value="Eukaryota"/>
</dbReference>
<dbReference type="GeneTree" id="ENSGT00940000160336"/>
<dbReference type="InParanoid" id="Q8N4M1"/>
<dbReference type="OMA" id="LLGIRYM"/>
<dbReference type="OrthoDB" id="420519at2759"/>
<dbReference type="PAN-GO" id="Q8N4M1">
    <property type="GO annotations" value="3 GO annotations based on evolutionary models"/>
</dbReference>
<dbReference type="PhylomeDB" id="Q8N4M1"/>
<dbReference type="TreeFam" id="TF313325"/>
<dbReference type="PathwayCommons" id="Q8N4M1"/>
<dbReference type="Reactome" id="R-HSA-1483191">
    <property type="pathway name" value="Synthesis of PC"/>
</dbReference>
<dbReference type="Reactome" id="R-HSA-425366">
    <property type="pathway name" value="Transport of bile salts and organic acids, metal ions and amine compounds"/>
</dbReference>
<dbReference type="SignaLink" id="Q8N4M1"/>
<dbReference type="BioGRID-ORCS" id="126969">
    <property type="hits" value="18 hits in 1146 CRISPR screens"/>
</dbReference>
<dbReference type="ChiTaRS" id="SLC44A3">
    <property type="organism name" value="human"/>
</dbReference>
<dbReference type="GenomeRNAi" id="126969"/>
<dbReference type="Pharos" id="Q8N4M1">
    <property type="development level" value="Tbio"/>
</dbReference>
<dbReference type="PRO" id="PR:Q8N4M1"/>
<dbReference type="Proteomes" id="UP000005640">
    <property type="component" value="Chromosome 1"/>
</dbReference>
<dbReference type="RNAct" id="Q8N4M1">
    <property type="molecule type" value="protein"/>
</dbReference>
<dbReference type="Bgee" id="ENSG00000143036">
    <property type="expression patterns" value="Expressed in mucosa of transverse colon and 143 other cell types or tissues"/>
</dbReference>
<dbReference type="ExpressionAtlas" id="Q8N4M1">
    <property type="expression patterns" value="baseline and differential"/>
</dbReference>
<dbReference type="GO" id="GO:0016020">
    <property type="term" value="C:membrane"/>
    <property type="evidence" value="ECO:0000318"/>
    <property type="project" value="GO_Central"/>
</dbReference>
<dbReference type="GO" id="GO:0005886">
    <property type="term" value="C:plasma membrane"/>
    <property type="evidence" value="ECO:0000304"/>
    <property type="project" value="Reactome"/>
</dbReference>
<dbReference type="GO" id="GO:0015220">
    <property type="term" value="F:choline transmembrane transporter activity"/>
    <property type="evidence" value="ECO:0000304"/>
    <property type="project" value="Reactome"/>
</dbReference>
<dbReference type="GO" id="GO:0022857">
    <property type="term" value="F:transmembrane transporter activity"/>
    <property type="evidence" value="ECO:0000318"/>
    <property type="project" value="GO_Central"/>
</dbReference>
<dbReference type="GO" id="GO:0006656">
    <property type="term" value="P:phosphatidylcholine biosynthetic process"/>
    <property type="evidence" value="ECO:0000304"/>
    <property type="project" value="Reactome"/>
</dbReference>
<dbReference type="GO" id="GO:0055085">
    <property type="term" value="P:transmembrane transport"/>
    <property type="evidence" value="ECO:0000318"/>
    <property type="project" value="GO_Central"/>
</dbReference>
<dbReference type="InterPro" id="IPR007603">
    <property type="entry name" value="Choline_transptr-like"/>
</dbReference>
<dbReference type="PANTHER" id="PTHR12385">
    <property type="entry name" value="CHOLINE TRANSPORTER-LIKE (SLC FAMILY 44)"/>
    <property type="match status" value="1"/>
</dbReference>
<dbReference type="PANTHER" id="PTHR12385:SF13">
    <property type="entry name" value="CHOLINE TRANSPORTER-LIKE PROTEIN 3"/>
    <property type="match status" value="1"/>
</dbReference>
<dbReference type="Pfam" id="PF04515">
    <property type="entry name" value="Choline_transpo"/>
    <property type="match status" value="1"/>
</dbReference>
<accession>Q8N4M1</accession>
<accession>B4DVY4</accession>
<accession>B4E1M4</accession>
<accession>B7ZA08</accession>
<accession>E9PJH2</accession>
<accession>E9PJY8</accession>
<accession>Q6UWT1</accession>
<accession>Q7Z6C5</accession>
<accession>Q9BWY7</accession>
<feature type="chain" id="PRO_0000191720" description="Choline transporter-like protein 3">
    <location>
        <begin position="1"/>
        <end position="653"/>
    </location>
</feature>
<feature type="transmembrane region" description="Helical" evidence="2">
    <location>
        <begin position="34"/>
        <end position="54"/>
    </location>
</feature>
<feature type="transmembrane region" description="Helical" evidence="2">
    <location>
        <begin position="213"/>
        <end position="233"/>
    </location>
</feature>
<feature type="transmembrane region" description="Helical" evidence="2">
    <location>
        <begin position="243"/>
        <end position="263"/>
    </location>
</feature>
<feature type="transmembrane region" description="Helical" evidence="2">
    <location>
        <begin position="284"/>
        <end position="304"/>
    </location>
</feature>
<feature type="transmembrane region" description="Helical" evidence="2">
    <location>
        <begin position="334"/>
        <end position="354"/>
    </location>
</feature>
<feature type="transmembrane region" description="Helical" evidence="2">
    <location>
        <begin position="384"/>
        <end position="404"/>
    </location>
</feature>
<feature type="transmembrane region" description="Helical" evidence="2">
    <location>
        <begin position="534"/>
        <end position="554"/>
    </location>
</feature>
<feature type="transmembrane region" description="Helical" evidence="2">
    <location>
        <begin position="563"/>
        <end position="583"/>
    </location>
</feature>
<feature type="region of interest" description="Disordered" evidence="3">
    <location>
        <begin position="632"/>
        <end position="653"/>
    </location>
</feature>
<feature type="compositionally biased region" description="Basic and acidic residues" evidence="3">
    <location>
        <begin position="634"/>
        <end position="644"/>
    </location>
</feature>
<feature type="glycosylation site" description="N-linked (GlcNAc...) asparagine" evidence="2">
    <location>
        <position position="136"/>
    </location>
</feature>
<feature type="glycosylation site" description="N-linked (GlcNAc...) asparagine" evidence="2">
    <location>
        <position position="151"/>
    </location>
</feature>
<feature type="glycosylation site" description="N-linked (GlcNAc...) asparagine" evidence="2">
    <location>
        <position position="412"/>
    </location>
</feature>
<feature type="glycosylation site" description="N-linked (GlcNAc...) asparagine" evidence="2">
    <location>
        <position position="503"/>
    </location>
</feature>
<feature type="glycosylation site" description="N-linked (GlcNAc...) asparagine" evidence="2">
    <location>
        <position position="521"/>
    </location>
</feature>
<feature type="splice variant" id="VSP_036151" description="In isoform 2 and isoform 5." evidence="7 8">
    <location>
        <begin position="1"/>
        <end position="48"/>
    </location>
</feature>
<feature type="splice variant" id="VSP_036152" description="In isoform 3 and isoform 4." evidence="7">
    <location>
        <begin position="11"/>
        <end position="46"/>
    </location>
</feature>
<feature type="splice variant" id="VSP_044713" description="In isoform 4, isoform 5 and isoform 6." evidence="7">
    <location>
        <begin position="107"/>
        <end position="138"/>
    </location>
</feature>
<feature type="splice variant" id="VSP_045974" description="In isoform 5 and isoform 6." evidence="7">
    <location>
        <position position="465"/>
    </location>
</feature>
<feature type="sequence variant" id="VAR_023405" description="In dbSNP:rs859098." evidence="4 5">
    <original>V</original>
    <variation>I</variation>
    <location>
        <position position="438"/>
    </location>
</feature>
<feature type="sequence variant" id="VAR_064752" description="Found in a renal cell carcinoma sample; somatic mutation." evidence="6">
    <original>G</original>
    <variation>W</variation>
    <location>
        <position position="441"/>
    </location>
</feature>
<feature type="sequence conflict" description="In Ref. 1; BAG62846." evidence="9" ref="1">
    <original>C</original>
    <variation>R</variation>
    <location>
        <position position="3"/>
    </location>
</feature>
<feature type="sequence conflict" description="In Ref. 1; BAG62846." evidence="9" ref="1">
    <original>F</original>
    <variation>L</variation>
    <location>
        <position position="316"/>
    </location>
</feature>
<evidence type="ECO:0000250" key="1"/>
<evidence type="ECO:0000255" key="2"/>
<evidence type="ECO:0000256" key="3">
    <source>
        <dbReference type="SAM" id="MobiDB-lite"/>
    </source>
</evidence>
<evidence type="ECO:0000269" key="4">
    <source>
    </source>
</evidence>
<evidence type="ECO:0000269" key="5">
    <source>
    </source>
</evidence>
<evidence type="ECO:0000269" key="6">
    <source>
    </source>
</evidence>
<evidence type="ECO:0000303" key="7">
    <source>
    </source>
</evidence>
<evidence type="ECO:0000303" key="8">
    <source>
    </source>
</evidence>
<evidence type="ECO:0000305" key="9"/>
<reference key="1">
    <citation type="journal article" date="2004" name="Nat. Genet.">
        <title>Complete sequencing and characterization of 21,243 full-length human cDNAs.</title>
        <authorList>
            <person name="Ota T."/>
            <person name="Suzuki Y."/>
            <person name="Nishikawa T."/>
            <person name="Otsuki T."/>
            <person name="Sugiyama T."/>
            <person name="Irie R."/>
            <person name="Wakamatsu A."/>
            <person name="Hayashi K."/>
            <person name="Sato H."/>
            <person name="Nagai K."/>
            <person name="Kimura K."/>
            <person name="Makita H."/>
            <person name="Sekine M."/>
            <person name="Obayashi M."/>
            <person name="Nishi T."/>
            <person name="Shibahara T."/>
            <person name="Tanaka T."/>
            <person name="Ishii S."/>
            <person name="Yamamoto J."/>
            <person name="Saito K."/>
            <person name="Kawai Y."/>
            <person name="Isono Y."/>
            <person name="Nakamura Y."/>
            <person name="Nagahari K."/>
            <person name="Murakami K."/>
            <person name="Yasuda T."/>
            <person name="Iwayanagi T."/>
            <person name="Wagatsuma M."/>
            <person name="Shiratori A."/>
            <person name="Sudo H."/>
            <person name="Hosoiri T."/>
            <person name="Kaku Y."/>
            <person name="Kodaira H."/>
            <person name="Kondo H."/>
            <person name="Sugawara M."/>
            <person name="Takahashi M."/>
            <person name="Kanda K."/>
            <person name="Yokoi T."/>
            <person name="Furuya T."/>
            <person name="Kikkawa E."/>
            <person name="Omura Y."/>
            <person name="Abe K."/>
            <person name="Kamihara K."/>
            <person name="Katsuta N."/>
            <person name="Sato K."/>
            <person name="Tanikawa M."/>
            <person name="Yamazaki M."/>
            <person name="Ninomiya K."/>
            <person name="Ishibashi T."/>
            <person name="Yamashita H."/>
            <person name="Murakawa K."/>
            <person name="Fujimori K."/>
            <person name="Tanai H."/>
            <person name="Kimata M."/>
            <person name="Watanabe M."/>
            <person name="Hiraoka S."/>
            <person name="Chiba Y."/>
            <person name="Ishida S."/>
            <person name="Ono Y."/>
            <person name="Takiguchi S."/>
            <person name="Watanabe S."/>
            <person name="Yosida M."/>
            <person name="Hotuta T."/>
            <person name="Kusano J."/>
            <person name="Kanehori K."/>
            <person name="Takahashi-Fujii A."/>
            <person name="Hara H."/>
            <person name="Tanase T.-O."/>
            <person name="Nomura Y."/>
            <person name="Togiya S."/>
            <person name="Komai F."/>
            <person name="Hara R."/>
            <person name="Takeuchi K."/>
            <person name="Arita M."/>
            <person name="Imose N."/>
            <person name="Musashino K."/>
            <person name="Yuuki H."/>
            <person name="Oshima A."/>
            <person name="Sasaki N."/>
            <person name="Aotsuka S."/>
            <person name="Yoshikawa Y."/>
            <person name="Matsunawa H."/>
            <person name="Ichihara T."/>
            <person name="Shiohata N."/>
            <person name="Sano S."/>
            <person name="Moriya S."/>
            <person name="Momiyama H."/>
            <person name="Satoh N."/>
            <person name="Takami S."/>
            <person name="Terashima Y."/>
            <person name="Suzuki O."/>
            <person name="Nakagawa S."/>
            <person name="Senoh A."/>
            <person name="Mizoguchi H."/>
            <person name="Goto Y."/>
            <person name="Shimizu F."/>
            <person name="Wakebe H."/>
            <person name="Hishigaki H."/>
            <person name="Watanabe T."/>
            <person name="Sugiyama A."/>
            <person name="Takemoto M."/>
            <person name="Kawakami B."/>
            <person name="Yamazaki M."/>
            <person name="Watanabe K."/>
            <person name="Kumagai A."/>
            <person name="Itakura S."/>
            <person name="Fukuzumi Y."/>
            <person name="Fujimori Y."/>
            <person name="Komiyama M."/>
            <person name="Tashiro H."/>
            <person name="Tanigami A."/>
            <person name="Fujiwara T."/>
            <person name="Ono T."/>
            <person name="Yamada K."/>
            <person name="Fujii Y."/>
            <person name="Ozaki K."/>
            <person name="Hirao M."/>
            <person name="Ohmori Y."/>
            <person name="Kawabata A."/>
            <person name="Hikiji T."/>
            <person name="Kobatake N."/>
            <person name="Inagaki H."/>
            <person name="Ikema Y."/>
            <person name="Okamoto S."/>
            <person name="Okitani R."/>
            <person name="Kawakami T."/>
            <person name="Noguchi S."/>
            <person name="Itoh T."/>
            <person name="Shigeta K."/>
            <person name="Senba T."/>
            <person name="Matsumura K."/>
            <person name="Nakajima Y."/>
            <person name="Mizuno T."/>
            <person name="Morinaga M."/>
            <person name="Sasaki M."/>
            <person name="Togashi T."/>
            <person name="Oyama M."/>
            <person name="Hata H."/>
            <person name="Watanabe M."/>
            <person name="Komatsu T."/>
            <person name="Mizushima-Sugano J."/>
            <person name="Satoh T."/>
            <person name="Shirai Y."/>
            <person name="Takahashi Y."/>
            <person name="Nakagawa K."/>
            <person name="Okumura K."/>
            <person name="Nagase T."/>
            <person name="Nomura N."/>
            <person name="Kikuchi H."/>
            <person name="Masuho Y."/>
            <person name="Yamashita R."/>
            <person name="Nakai K."/>
            <person name="Yada T."/>
            <person name="Nakamura Y."/>
            <person name="Ohara O."/>
            <person name="Isogai T."/>
            <person name="Sugano S."/>
        </authorList>
    </citation>
    <scope>NUCLEOTIDE SEQUENCE [LARGE SCALE MRNA] (ISOFORMS 3; 4 AND 5)</scope>
    <scope>VARIANT ILE-438</scope>
    <source>
        <tissue>Colon</tissue>
        <tissue>Stomach</tissue>
        <tissue>Trachea</tissue>
    </source>
</reference>
<reference key="2">
    <citation type="journal article" date="2006" name="Nature">
        <title>The DNA sequence and biological annotation of human chromosome 1.</title>
        <authorList>
            <person name="Gregory S.G."/>
            <person name="Barlow K.F."/>
            <person name="McLay K.E."/>
            <person name="Kaul R."/>
            <person name="Swarbreck D."/>
            <person name="Dunham A."/>
            <person name="Scott C.E."/>
            <person name="Howe K.L."/>
            <person name="Woodfine K."/>
            <person name="Spencer C.C.A."/>
            <person name="Jones M.C."/>
            <person name="Gillson C."/>
            <person name="Searle S."/>
            <person name="Zhou Y."/>
            <person name="Kokocinski F."/>
            <person name="McDonald L."/>
            <person name="Evans R."/>
            <person name="Phillips K."/>
            <person name="Atkinson A."/>
            <person name="Cooper R."/>
            <person name="Jones C."/>
            <person name="Hall R.E."/>
            <person name="Andrews T.D."/>
            <person name="Lloyd C."/>
            <person name="Ainscough R."/>
            <person name="Almeida J.P."/>
            <person name="Ambrose K.D."/>
            <person name="Anderson F."/>
            <person name="Andrew R.W."/>
            <person name="Ashwell R.I.S."/>
            <person name="Aubin K."/>
            <person name="Babbage A.K."/>
            <person name="Bagguley C.L."/>
            <person name="Bailey J."/>
            <person name="Beasley H."/>
            <person name="Bethel G."/>
            <person name="Bird C.P."/>
            <person name="Bray-Allen S."/>
            <person name="Brown J.Y."/>
            <person name="Brown A.J."/>
            <person name="Buckley D."/>
            <person name="Burton J."/>
            <person name="Bye J."/>
            <person name="Carder C."/>
            <person name="Chapman J.C."/>
            <person name="Clark S.Y."/>
            <person name="Clarke G."/>
            <person name="Clee C."/>
            <person name="Cobley V."/>
            <person name="Collier R.E."/>
            <person name="Corby N."/>
            <person name="Coville G.J."/>
            <person name="Davies J."/>
            <person name="Deadman R."/>
            <person name="Dunn M."/>
            <person name="Earthrowl M."/>
            <person name="Ellington A.G."/>
            <person name="Errington H."/>
            <person name="Frankish A."/>
            <person name="Frankland J."/>
            <person name="French L."/>
            <person name="Garner P."/>
            <person name="Garnett J."/>
            <person name="Gay L."/>
            <person name="Ghori M.R.J."/>
            <person name="Gibson R."/>
            <person name="Gilby L.M."/>
            <person name="Gillett W."/>
            <person name="Glithero R.J."/>
            <person name="Grafham D.V."/>
            <person name="Griffiths C."/>
            <person name="Griffiths-Jones S."/>
            <person name="Grocock R."/>
            <person name="Hammond S."/>
            <person name="Harrison E.S.I."/>
            <person name="Hart E."/>
            <person name="Haugen E."/>
            <person name="Heath P.D."/>
            <person name="Holmes S."/>
            <person name="Holt K."/>
            <person name="Howden P.J."/>
            <person name="Hunt A.R."/>
            <person name="Hunt S.E."/>
            <person name="Hunter G."/>
            <person name="Isherwood J."/>
            <person name="James R."/>
            <person name="Johnson C."/>
            <person name="Johnson D."/>
            <person name="Joy A."/>
            <person name="Kay M."/>
            <person name="Kershaw J.K."/>
            <person name="Kibukawa M."/>
            <person name="Kimberley A.M."/>
            <person name="King A."/>
            <person name="Knights A.J."/>
            <person name="Lad H."/>
            <person name="Laird G."/>
            <person name="Lawlor S."/>
            <person name="Leongamornlert D.A."/>
            <person name="Lloyd D.M."/>
            <person name="Loveland J."/>
            <person name="Lovell J."/>
            <person name="Lush M.J."/>
            <person name="Lyne R."/>
            <person name="Martin S."/>
            <person name="Mashreghi-Mohammadi M."/>
            <person name="Matthews L."/>
            <person name="Matthews N.S.W."/>
            <person name="McLaren S."/>
            <person name="Milne S."/>
            <person name="Mistry S."/>
            <person name="Moore M.J.F."/>
            <person name="Nickerson T."/>
            <person name="O'Dell C.N."/>
            <person name="Oliver K."/>
            <person name="Palmeiri A."/>
            <person name="Palmer S.A."/>
            <person name="Parker A."/>
            <person name="Patel D."/>
            <person name="Pearce A.V."/>
            <person name="Peck A.I."/>
            <person name="Pelan S."/>
            <person name="Phelps K."/>
            <person name="Phillimore B.J."/>
            <person name="Plumb R."/>
            <person name="Rajan J."/>
            <person name="Raymond C."/>
            <person name="Rouse G."/>
            <person name="Saenphimmachak C."/>
            <person name="Sehra H.K."/>
            <person name="Sheridan E."/>
            <person name="Shownkeen R."/>
            <person name="Sims S."/>
            <person name="Skuce C.D."/>
            <person name="Smith M."/>
            <person name="Steward C."/>
            <person name="Subramanian S."/>
            <person name="Sycamore N."/>
            <person name="Tracey A."/>
            <person name="Tromans A."/>
            <person name="Van Helmond Z."/>
            <person name="Wall M."/>
            <person name="Wallis J.M."/>
            <person name="White S."/>
            <person name="Whitehead S.L."/>
            <person name="Wilkinson J.E."/>
            <person name="Willey D.L."/>
            <person name="Williams H."/>
            <person name="Wilming L."/>
            <person name="Wray P.W."/>
            <person name="Wu Z."/>
            <person name="Coulson A."/>
            <person name="Vaudin M."/>
            <person name="Sulston J.E."/>
            <person name="Durbin R.M."/>
            <person name="Hubbard T."/>
            <person name="Wooster R."/>
            <person name="Dunham I."/>
            <person name="Carter N.P."/>
            <person name="McVean G."/>
            <person name="Ross M.T."/>
            <person name="Harrow J."/>
            <person name="Olson M.V."/>
            <person name="Beck S."/>
            <person name="Rogers J."/>
            <person name="Bentley D.R."/>
        </authorList>
    </citation>
    <scope>NUCLEOTIDE SEQUENCE [LARGE SCALE GENOMIC DNA]</scope>
</reference>
<reference key="3">
    <citation type="journal article" date="2004" name="Genome Res.">
        <title>The status, quality, and expansion of the NIH full-length cDNA project: the Mammalian Gene Collection (MGC).</title>
        <authorList>
            <consortium name="The MGC Project Team"/>
        </authorList>
    </citation>
    <scope>NUCLEOTIDE SEQUENCE [LARGE SCALE MRNA] (ISOFORMS 1 AND 2)</scope>
    <scope>VARIANT ILE-438</scope>
    <source>
        <tissue>Brain</tissue>
        <tissue>Colon</tissue>
    </source>
</reference>
<reference key="4">
    <citation type="journal article" date="2003" name="Genome Res.">
        <title>The secreted protein discovery initiative (SPDI), a large-scale effort to identify novel human secreted and transmembrane proteins: a bioinformatics assessment.</title>
        <authorList>
            <person name="Clark H.F."/>
            <person name="Gurney A.L."/>
            <person name="Abaya E."/>
            <person name="Baker K."/>
            <person name="Baldwin D.T."/>
            <person name="Brush J."/>
            <person name="Chen J."/>
            <person name="Chow B."/>
            <person name="Chui C."/>
            <person name="Crowley C."/>
            <person name="Currell B."/>
            <person name="Deuel B."/>
            <person name="Dowd P."/>
            <person name="Eaton D."/>
            <person name="Foster J.S."/>
            <person name="Grimaldi C."/>
            <person name="Gu Q."/>
            <person name="Hass P.E."/>
            <person name="Heldens S."/>
            <person name="Huang A."/>
            <person name="Kim H.S."/>
            <person name="Klimowski L."/>
            <person name="Jin Y."/>
            <person name="Johnson S."/>
            <person name="Lee J."/>
            <person name="Lewis L."/>
            <person name="Liao D."/>
            <person name="Mark M.R."/>
            <person name="Robbie E."/>
            <person name="Sanchez C."/>
            <person name="Schoenfeld J."/>
            <person name="Seshagiri S."/>
            <person name="Simmons L."/>
            <person name="Singh J."/>
            <person name="Smith V."/>
            <person name="Stinson J."/>
            <person name="Vagts A."/>
            <person name="Vandlen R.L."/>
            <person name="Watanabe C."/>
            <person name="Wieand D."/>
            <person name="Woods K."/>
            <person name="Xie M.-H."/>
            <person name="Yansura D.G."/>
            <person name="Yi S."/>
            <person name="Yu G."/>
            <person name="Yuan J."/>
            <person name="Zhang M."/>
            <person name="Zhang Z."/>
            <person name="Goddard A.D."/>
            <person name="Wood W.I."/>
            <person name="Godowski P.J."/>
            <person name="Gray A.M."/>
        </authorList>
    </citation>
    <scope>NUCLEOTIDE SEQUENCE [LARGE SCALE MRNA] OF 147-653</scope>
</reference>
<reference key="5">
    <citation type="journal article" date="2000" name="Proc. Natl. Acad. Sci. U.S.A.">
        <title>An electric lobe suppressor for a yeast choline transport mutation belongs to a new family of transporter-like proteins.</title>
        <authorList>
            <person name="O'Regan S."/>
            <person name="Traiffort E."/>
            <person name="Ruat M."/>
            <person name="Cha N."/>
            <person name="Compaore D."/>
            <person name="Meunier F.-M."/>
        </authorList>
    </citation>
    <scope>IDENTIFICATION</scope>
    <scope>NOMENCLATURE</scope>
</reference>
<reference key="6">
    <citation type="journal article" date="2011" name="Nature">
        <title>Exome sequencing identifies frequent mutation of the SWI/SNF complex gene PBRM1 in renal carcinoma.</title>
        <authorList>
            <person name="Varela I."/>
            <person name="Tarpey P."/>
            <person name="Raine K."/>
            <person name="Huang D."/>
            <person name="Ong C.K."/>
            <person name="Stephens P."/>
            <person name="Davies H."/>
            <person name="Jones D."/>
            <person name="Lin M.L."/>
            <person name="Teague J."/>
            <person name="Bignell G."/>
            <person name="Butler A."/>
            <person name="Cho J."/>
            <person name="Dalgliesh G.L."/>
            <person name="Galappaththige D."/>
            <person name="Greenman C."/>
            <person name="Hardy C."/>
            <person name="Jia M."/>
            <person name="Latimer C."/>
            <person name="Lau K.W."/>
            <person name="Marshall J."/>
            <person name="McLaren S."/>
            <person name="Menzies A."/>
            <person name="Mudie L."/>
            <person name="Stebbings L."/>
            <person name="Largaespada D.A."/>
            <person name="Wessels L.F.A."/>
            <person name="Richard S."/>
            <person name="Kahnoski R.J."/>
            <person name="Anema J."/>
            <person name="Tuveson D.A."/>
            <person name="Perez-Mancera P.A."/>
            <person name="Mustonen V."/>
            <person name="Fischer A."/>
            <person name="Adams D.J."/>
            <person name="Rust A."/>
            <person name="Chan-On W."/>
            <person name="Subimerb C."/>
            <person name="Dykema K."/>
            <person name="Furge K."/>
            <person name="Campbell P.J."/>
            <person name="Teh B.T."/>
            <person name="Stratton M.R."/>
            <person name="Futreal P.A."/>
        </authorList>
    </citation>
    <scope>VARIANT TRP-441</scope>
</reference>
<proteinExistence type="evidence at protein level"/>
<comment type="interaction">
    <interactant intactId="EBI-10265585">
        <id>Q8N4M1</id>
    </interactant>
    <interactant intactId="EBI-741101">
        <id>Q13643</id>
        <label>FHL3</label>
    </interactant>
    <organismsDiffer>false</organismsDiffer>
    <experiments>3</experiments>
</comment>
<comment type="interaction">
    <interactant intactId="EBI-12056955">
        <id>Q8N4M1-3</id>
    </interactant>
    <interactant intactId="EBI-2813554">
        <id>Q8WTS1</id>
        <label>ABHD5</label>
    </interactant>
    <organismsDiffer>false</organismsDiffer>
    <experiments>3</experiments>
</comment>
<comment type="interaction">
    <interactant intactId="EBI-12056955">
        <id>Q8N4M1-3</id>
    </interactant>
    <interactant intactId="EBI-725233">
        <id>O14732</id>
        <label>IMPA2</label>
    </interactant>
    <organismsDiffer>false</organismsDiffer>
    <experiments>3</experiments>
</comment>
<comment type="subcellular location">
    <subcellularLocation>
        <location evidence="1">Membrane</location>
        <topology evidence="1">Multi-pass membrane protein</topology>
    </subcellularLocation>
</comment>
<comment type="alternative products">
    <event type="alternative splicing"/>
    <isoform>
        <id>Q8N4M1-1</id>
        <name>1</name>
        <sequence type="displayed"/>
    </isoform>
    <isoform>
        <id>Q8N4M1-2</id>
        <name>2</name>
        <sequence type="described" ref="VSP_036151"/>
    </isoform>
    <isoform>
        <id>Q8N4M1-3</id>
        <name>3</name>
        <sequence type="described" ref="VSP_036152"/>
    </isoform>
    <isoform>
        <id>Q8N4M1-4</id>
        <name>4</name>
        <sequence type="described" ref="VSP_036152 VSP_044713"/>
    </isoform>
    <isoform>
        <id>Q8N4M1-5</id>
        <name>5</name>
        <sequence type="described" ref="VSP_036151 VSP_044713 VSP_045974"/>
    </isoform>
    <isoform>
        <id>Q8N4M1-6</id>
        <name>6</name>
        <sequence type="described" ref="VSP_044713 VSP_045974"/>
    </isoform>
</comment>
<comment type="similarity">
    <text evidence="9">Belongs to the CTL (choline transporter-like) family.</text>
</comment>
<comment type="sequence caution" evidence="9">
    <conflict type="erroneous initiation">
        <sequence resource="EMBL-CDS" id="AAH33858"/>
    </conflict>
</comment>
<comment type="sequence caution" evidence="9">
    <conflict type="erroneous initiation">
        <sequence resource="EMBL-CDS" id="AAQ89022"/>
    </conflict>
</comment>